<accession>Q5HQN7</accession>
<comment type="function">
    <text evidence="1">Catalyzes the radical-mediated insertion of two sulfur atoms into the C-6 and C-8 positions of the octanoyl moiety bound to the lipoyl domains of lipoate-dependent enzymes, thereby converting the octanoylated domains into lipoylated derivatives.</text>
</comment>
<comment type="catalytic activity">
    <reaction evidence="1">
        <text>[[Fe-S] cluster scaffold protein carrying a second [4Fe-4S](2+) cluster] + N(6)-octanoyl-L-lysyl-[protein] + 2 oxidized [2Fe-2S]-[ferredoxin] + 2 S-adenosyl-L-methionine + 4 H(+) = [[Fe-S] cluster scaffold protein] + N(6)-[(R)-dihydrolipoyl]-L-lysyl-[protein] + 4 Fe(3+) + 2 hydrogen sulfide + 2 5'-deoxyadenosine + 2 L-methionine + 2 reduced [2Fe-2S]-[ferredoxin]</text>
        <dbReference type="Rhea" id="RHEA:16585"/>
        <dbReference type="Rhea" id="RHEA-COMP:9928"/>
        <dbReference type="Rhea" id="RHEA-COMP:10000"/>
        <dbReference type="Rhea" id="RHEA-COMP:10001"/>
        <dbReference type="Rhea" id="RHEA-COMP:10475"/>
        <dbReference type="Rhea" id="RHEA-COMP:14568"/>
        <dbReference type="Rhea" id="RHEA-COMP:14569"/>
        <dbReference type="ChEBI" id="CHEBI:15378"/>
        <dbReference type="ChEBI" id="CHEBI:17319"/>
        <dbReference type="ChEBI" id="CHEBI:29034"/>
        <dbReference type="ChEBI" id="CHEBI:29919"/>
        <dbReference type="ChEBI" id="CHEBI:33722"/>
        <dbReference type="ChEBI" id="CHEBI:33737"/>
        <dbReference type="ChEBI" id="CHEBI:33738"/>
        <dbReference type="ChEBI" id="CHEBI:57844"/>
        <dbReference type="ChEBI" id="CHEBI:59789"/>
        <dbReference type="ChEBI" id="CHEBI:78809"/>
        <dbReference type="ChEBI" id="CHEBI:83100"/>
        <dbReference type="EC" id="2.8.1.8"/>
    </reaction>
</comment>
<comment type="cofactor">
    <cofactor evidence="1">
        <name>[4Fe-4S] cluster</name>
        <dbReference type="ChEBI" id="CHEBI:49883"/>
    </cofactor>
    <text evidence="1">Binds 2 [4Fe-4S] clusters per subunit. One cluster is coordinated with 3 cysteines and an exchangeable S-adenosyl-L-methionine.</text>
</comment>
<comment type="pathway">
    <text evidence="1">Protein modification; protein lipoylation via endogenous pathway; protein N(6)-(lipoyl)lysine from octanoyl-[acyl-carrier-protein].</text>
</comment>
<comment type="subcellular location">
    <subcellularLocation>
        <location evidence="1">Cytoplasm</location>
    </subcellularLocation>
</comment>
<comment type="similarity">
    <text evidence="1">Belongs to the radical SAM superfamily. Lipoyl synthase family.</text>
</comment>
<reference key="1">
    <citation type="journal article" date="2005" name="J. Bacteriol.">
        <title>Insights on evolution of virulence and resistance from the complete genome analysis of an early methicillin-resistant Staphylococcus aureus strain and a biofilm-producing methicillin-resistant Staphylococcus epidermidis strain.</title>
        <authorList>
            <person name="Gill S.R."/>
            <person name="Fouts D.E."/>
            <person name="Archer G.L."/>
            <person name="Mongodin E.F."/>
            <person name="DeBoy R.T."/>
            <person name="Ravel J."/>
            <person name="Paulsen I.T."/>
            <person name="Kolonay J.F."/>
            <person name="Brinkac L.M."/>
            <person name="Beanan M.J."/>
            <person name="Dodson R.J."/>
            <person name="Daugherty S.C."/>
            <person name="Madupu R."/>
            <person name="Angiuoli S.V."/>
            <person name="Durkin A.S."/>
            <person name="Haft D.H."/>
            <person name="Vamathevan J.J."/>
            <person name="Khouri H."/>
            <person name="Utterback T.R."/>
            <person name="Lee C."/>
            <person name="Dimitrov G."/>
            <person name="Jiang L."/>
            <person name="Qin H."/>
            <person name="Weidman J."/>
            <person name="Tran K."/>
            <person name="Kang K.H."/>
            <person name="Hance I.R."/>
            <person name="Nelson K.E."/>
            <person name="Fraser C.M."/>
        </authorList>
    </citation>
    <scope>NUCLEOTIDE SEQUENCE [LARGE SCALE GENOMIC DNA]</scope>
    <source>
        <strain>ATCC 35984 / DSM 28319 / BCRC 17069 / CCUG 31568 / BM 3577 / RP62A</strain>
    </source>
</reference>
<evidence type="ECO:0000255" key="1">
    <source>
        <dbReference type="HAMAP-Rule" id="MF_00206"/>
    </source>
</evidence>
<evidence type="ECO:0000255" key="2">
    <source>
        <dbReference type="PROSITE-ProRule" id="PRU01266"/>
    </source>
</evidence>
<evidence type="ECO:0000256" key="3">
    <source>
        <dbReference type="SAM" id="MobiDB-lite"/>
    </source>
</evidence>
<gene>
    <name evidence="1" type="primary">lipA</name>
    <name type="ordered locus">SERP0511</name>
</gene>
<organism>
    <name type="scientific">Staphylococcus epidermidis (strain ATCC 35984 / DSM 28319 / BCRC 17069 / CCUG 31568 / BM 3577 / RP62A)</name>
    <dbReference type="NCBI Taxonomy" id="176279"/>
    <lineage>
        <taxon>Bacteria</taxon>
        <taxon>Bacillati</taxon>
        <taxon>Bacillota</taxon>
        <taxon>Bacilli</taxon>
        <taxon>Bacillales</taxon>
        <taxon>Staphylococcaceae</taxon>
        <taxon>Staphylococcus</taxon>
    </lineage>
</organism>
<feature type="chain" id="PRO_0000102364" description="Lipoyl synthase">
    <location>
        <begin position="1"/>
        <end position="304"/>
    </location>
</feature>
<feature type="domain" description="Radical SAM core" evidence="2">
    <location>
        <begin position="54"/>
        <end position="270"/>
    </location>
</feature>
<feature type="region of interest" description="Disordered" evidence="3">
    <location>
        <begin position="282"/>
        <end position="304"/>
    </location>
</feature>
<feature type="binding site" evidence="1">
    <location>
        <position position="41"/>
    </location>
    <ligand>
        <name>[4Fe-4S] cluster</name>
        <dbReference type="ChEBI" id="CHEBI:49883"/>
        <label>1</label>
    </ligand>
</feature>
<feature type="binding site" evidence="1">
    <location>
        <position position="46"/>
    </location>
    <ligand>
        <name>[4Fe-4S] cluster</name>
        <dbReference type="ChEBI" id="CHEBI:49883"/>
        <label>1</label>
    </ligand>
</feature>
<feature type="binding site" evidence="1">
    <location>
        <position position="52"/>
    </location>
    <ligand>
        <name>[4Fe-4S] cluster</name>
        <dbReference type="ChEBI" id="CHEBI:49883"/>
        <label>1</label>
    </ligand>
</feature>
<feature type="binding site" evidence="1">
    <location>
        <position position="68"/>
    </location>
    <ligand>
        <name>[4Fe-4S] cluster</name>
        <dbReference type="ChEBI" id="CHEBI:49883"/>
        <label>2</label>
        <note>4Fe-4S-S-AdoMet</note>
    </ligand>
</feature>
<feature type="binding site" evidence="1">
    <location>
        <position position="72"/>
    </location>
    <ligand>
        <name>[4Fe-4S] cluster</name>
        <dbReference type="ChEBI" id="CHEBI:49883"/>
        <label>2</label>
        <note>4Fe-4S-S-AdoMet</note>
    </ligand>
</feature>
<feature type="binding site" evidence="1">
    <location>
        <position position="75"/>
    </location>
    <ligand>
        <name>[4Fe-4S] cluster</name>
        <dbReference type="ChEBI" id="CHEBI:49883"/>
        <label>2</label>
        <note>4Fe-4S-S-AdoMet</note>
    </ligand>
</feature>
<feature type="binding site" evidence="1">
    <location>
        <position position="281"/>
    </location>
    <ligand>
        <name>[4Fe-4S] cluster</name>
        <dbReference type="ChEBI" id="CHEBI:49883"/>
        <label>1</label>
    </ligand>
</feature>
<name>LIPA_STAEQ</name>
<sequence length="304" mass="35028">MATRNEEILRKPDWLKIKLNTNDNYTGLKKMMREKNLHTVCEEAKCPNIHECWGARRTATFMILGAVCTRACRFCAVKTGLPNELDLNEPERVAESVELMNLKHVVITAVARDDLRDQGSNVYAETVRKVRERNPFTTIEILPSDMGGDYEALETLMASRPDILNHNIETVRRLTPRVRARATYDRTLQFLRRSKELQPDIPTKSSLMVGLGETMEEIYETMDDLRANDVDILTIGQYLQPSRKHLKVEKYYTPLEFGKMRKIAMEKGFKHCQAGPLVRSSYHADEQVNEAAKEKQRQGEEQLN</sequence>
<dbReference type="EC" id="2.8.1.8" evidence="1"/>
<dbReference type="EMBL" id="CP000029">
    <property type="protein sequence ID" value="AAW53894.1"/>
    <property type="molecule type" value="Genomic_DNA"/>
</dbReference>
<dbReference type="RefSeq" id="WP_001831979.1">
    <property type="nucleotide sequence ID" value="NC_002976.3"/>
</dbReference>
<dbReference type="SMR" id="Q5HQN7"/>
<dbReference type="STRING" id="176279.SERP0511"/>
<dbReference type="GeneID" id="50019235"/>
<dbReference type="KEGG" id="ser:SERP0511"/>
<dbReference type="eggNOG" id="COG0320">
    <property type="taxonomic scope" value="Bacteria"/>
</dbReference>
<dbReference type="HOGENOM" id="CLU_033144_2_1_9"/>
<dbReference type="Proteomes" id="UP000000531">
    <property type="component" value="Chromosome"/>
</dbReference>
<dbReference type="GO" id="GO:0005737">
    <property type="term" value="C:cytoplasm"/>
    <property type="evidence" value="ECO:0007669"/>
    <property type="project" value="UniProtKB-SubCell"/>
</dbReference>
<dbReference type="GO" id="GO:0051539">
    <property type="term" value="F:4 iron, 4 sulfur cluster binding"/>
    <property type="evidence" value="ECO:0007669"/>
    <property type="project" value="UniProtKB-UniRule"/>
</dbReference>
<dbReference type="GO" id="GO:0016992">
    <property type="term" value="F:lipoate synthase activity"/>
    <property type="evidence" value="ECO:0007669"/>
    <property type="project" value="UniProtKB-UniRule"/>
</dbReference>
<dbReference type="GO" id="GO:0046872">
    <property type="term" value="F:metal ion binding"/>
    <property type="evidence" value="ECO:0007669"/>
    <property type="project" value="UniProtKB-KW"/>
</dbReference>
<dbReference type="CDD" id="cd01335">
    <property type="entry name" value="Radical_SAM"/>
    <property type="match status" value="1"/>
</dbReference>
<dbReference type="FunFam" id="3.20.20.70:FF:000040">
    <property type="entry name" value="Lipoyl synthase"/>
    <property type="match status" value="1"/>
</dbReference>
<dbReference type="Gene3D" id="3.20.20.70">
    <property type="entry name" value="Aldolase class I"/>
    <property type="match status" value="1"/>
</dbReference>
<dbReference type="HAMAP" id="MF_00206">
    <property type="entry name" value="Lipoyl_synth"/>
    <property type="match status" value="1"/>
</dbReference>
<dbReference type="InterPro" id="IPR013785">
    <property type="entry name" value="Aldolase_TIM"/>
</dbReference>
<dbReference type="InterPro" id="IPR006638">
    <property type="entry name" value="Elp3/MiaA/NifB-like_rSAM"/>
</dbReference>
<dbReference type="InterPro" id="IPR031691">
    <property type="entry name" value="LIAS_N"/>
</dbReference>
<dbReference type="InterPro" id="IPR003698">
    <property type="entry name" value="Lipoyl_synth"/>
</dbReference>
<dbReference type="InterPro" id="IPR007197">
    <property type="entry name" value="rSAM"/>
</dbReference>
<dbReference type="NCBIfam" id="TIGR00510">
    <property type="entry name" value="lipA"/>
    <property type="match status" value="1"/>
</dbReference>
<dbReference type="NCBIfam" id="NF004019">
    <property type="entry name" value="PRK05481.1"/>
    <property type="match status" value="1"/>
</dbReference>
<dbReference type="NCBIfam" id="NF009544">
    <property type="entry name" value="PRK12928.1"/>
    <property type="match status" value="1"/>
</dbReference>
<dbReference type="PANTHER" id="PTHR10949">
    <property type="entry name" value="LIPOYL SYNTHASE"/>
    <property type="match status" value="1"/>
</dbReference>
<dbReference type="PANTHER" id="PTHR10949:SF0">
    <property type="entry name" value="LIPOYL SYNTHASE, MITOCHONDRIAL"/>
    <property type="match status" value="1"/>
</dbReference>
<dbReference type="Pfam" id="PF16881">
    <property type="entry name" value="LIAS_N"/>
    <property type="match status" value="1"/>
</dbReference>
<dbReference type="Pfam" id="PF04055">
    <property type="entry name" value="Radical_SAM"/>
    <property type="match status" value="1"/>
</dbReference>
<dbReference type="PIRSF" id="PIRSF005963">
    <property type="entry name" value="Lipoyl_synth"/>
    <property type="match status" value="1"/>
</dbReference>
<dbReference type="SFLD" id="SFLDF00271">
    <property type="entry name" value="lipoyl_synthase"/>
    <property type="match status" value="1"/>
</dbReference>
<dbReference type="SFLD" id="SFLDG01058">
    <property type="entry name" value="lipoyl_synthase_like"/>
    <property type="match status" value="1"/>
</dbReference>
<dbReference type="SMART" id="SM00729">
    <property type="entry name" value="Elp3"/>
    <property type="match status" value="1"/>
</dbReference>
<dbReference type="SUPFAM" id="SSF102114">
    <property type="entry name" value="Radical SAM enzymes"/>
    <property type="match status" value="1"/>
</dbReference>
<dbReference type="PROSITE" id="PS51918">
    <property type="entry name" value="RADICAL_SAM"/>
    <property type="match status" value="1"/>
</dbReference>
<keyword id="KW-0004">4Fe-4S</keyword>
<keyword id="KW-0963">Cytoplasm</keyword>
<keyword id="KW-0408">Iron</keyword>
<keyword id="KW-0411">Iron-sulfur</keyword>
<keyword id="KW-0479">Metal-binding</keyword>
<keyword id="KW-1185">Reference proteome</keyword>
<keyword id="KW-0949">S-adenosyl-L-methionine</keyword>
<keyword id="KW-0808">Transferase</keyword>
<protein>
    <recommendedName>
        <fullName evidence="1">Lipoyl synthase</fullName>
        <ecNumber evidence="1">2.8.1.8</ecNumber>
    </recommendedName>
    <alternativeName>
        <fullName evidence="1">Lip-syn</fullName>
        <shortName evidence="1">LS</shortName>
    </alternativeName>
    <alternativeName>
        <fullName evidence="1">Lipoate synthase</fullName>
    </alternativeName>
    <alternativeName>
        <fullName evidence="1">Lipoic acid synthase</fullName>
    </alternativeName>
    <alternativeName>
        <fullName evidence="1">Sulfur insertion protein LipA</fullName>
    </alternativeName>
</protein>
<proteinExistence type="inferred from homology"/>